<dbReference type="EMBL" id="AE017341">
    <property type="protein sequence ID" value="AAW41122.1"/>
    <property type="molecule type" value="Genomic_DNA"/>
</dbReference>
<dbReference type="RefSeq" id="XP_566941.1">
    <property type="nucleotide sequence ID" value="XM_566941.1"/>
</dbReference>
<dbReference type="SMR" id="P0CO46"/>
<dbReference type="FunCoup" id="P0CO46">
    <property type="interactions" value="360"/>
</dbReference>
<dbReference type="STRING" id="214684.P0CO46"/>
<dbReference type="PaxDb" id="214684-P0CO46"/>
<dbReference type="EnsemblFungi" id="AAW41122">
    <property type="protein sequence ID" value="AAW41122"/>
    <property type="gene ID" value="CNA05860"/>
</dbReference>
<dbReference type="GeneID" id="3253234"/>
<dbReference type="KEGG" id="cne:CNA05860"/>
<dbReference type="VEuPathDB" id="FungiDB:CNA05860"/>
<dbReference type="eggNOG" id="KOG3273">
    <property type="taxonomic scope" value="Eukaryota"/>
</dbReference>
<dbReference type="HOGENOM" id="CLU_064992_0_2_1"/>
<dbReference type="InParanoid" id="P0CO46"/>
<dbReference type="OMA" id="TPLRNNW"/>
<dbReference type="OrthoDB" id="1932641at2759"/>
<dbReference type="Proteomes" id="UP000002149">
    <property type="component" value="Chromosome 1"/>
</dbReference>
<dbReference type="GO" id="GO:0005737">
    <property type="term" value="C:cytoplasm"/>
    <property type="evidence" value="ECO:0007669"/>
    <property type="project" value="UniProtKB-SubCell"/>
</dbReference>
<dbReference type="GO" id="GO:0005730">
    <property type="term" value="C:nucleolus"/>
    <property type="evidence" value="ECO:0007669"/>
    <property type="project" value="UniProtKB-SubCell"/>
</dbReference>
<dbReference type="GO" id="GO:0005634">
    <property type="term" value="C:nucleus"/>
    <property type="evidence" value="ECO:0000318"/>
    <property type="project" value="GO_Central"/>
</dbReference>
<dbReference type="GO" id="GO:0042134">
    <property type="term" value="F:rRNA primary transcript binding"/>
    <property type="evidence" value="ECO:0007669"/>
    <property type="project" value="EnsemblFungi"/>
</dbReference>
<dbReference type="GO" id="GO:0051082">
    <property type="term" value="F:unfolded protein binding"/>
    <property type="evidence" value="ECO:0007669"/>
    <property type="project" value="EnsemblFungi"/>
</dbReference>
<dbReference type="GO" id="GO:0000447">
    <property type="term" value="P:endonucleolytic cleavage in ITS1 to separate SSU-rRNA from 5.8S rRNA and LSU-rRNA from tricistronic rRNA transcript (SSU-rRNA, 5.8S rRNA, LSU-rRNA)"/>
    <property type="evidence" value="ECO:0007669"/>
    <property type="project" value="EnsemblFungi"/>
</dbReference>
<dbReference type="GO" id="GO:0000472">
    <property type="term" value="P:endonucleolytic cleavage to generate mature 5'-end of SSU-rRNA from (SSU-rRNA, 5.8S rRNA, LSU-rRNA)"/>
    <property type="evidence" value="ECO:0007669"/>
    <property type="project" value="EnsemblFungi"/>
</dbReference>
<dbReference type="GO" id="GO:0043248">
    <property type="term" value="P:proteasome assembly"/>
    <property type="evidence" value="ECO:0007669"/>
    <property type="project" value="EnsemblFungi"/>
</dbReference>
<dbReference type="GO" id="GO:0000056">
    <property type="term" value="P:ribosomal small subunit export from nucleus"/>
    <property type="evidence" value="ECO:0007669"/>
    <property type="project" value="EnsemblFungi"/>
</dbReference>
<dbReference type="GO" id="GO:0042255">
    <property type="term" value="P:ribosome assembly"/>
    <property type="evidence" value="ECO:0007669"/>
    <property type="project" value="EnsemblFungi"/>
</dbReference>
<dbReference type="CDD" id="cd22391">
    <property type="entry name" value="KH-I_PNO1_rpt1"/>
    <property type="match status" value="1"/>
</dbReference>
<dbReference type="CDD" id="cd22392">
    <property type="entry name" value="KH-I_PNO1_rpt2"/>
    <property type="match status" value="1"/>
</dbReference>
<dbReference type="FunFam" id="3.30.1370.10:FF:000009">
    <property type="entry name" value="RNA-binding protein PNO1"/>
    <property type="match status" value="1"/>
</dbReference>
<dbReference type="Gene3D" id="3.30.1370.10">
    <property type="entry name" value="K Homology domain, type 1"/>
    <property type="match status" value="1"/>
</dbReference>
<dbReference type="InterPro" id="IPR055212">
    <property type="entry name" value="KH-I_PNO1_first"/>
</dbReference>
<dbReference type="InterPro" id="IPR036612">
    <property type="entry name" value="KH_dom_type_1_sf"/>
</dbReference>
<dbReference type="InterPro" id="IPR055211">
    <property type="entry name" value="KH_PNO1_2nd"/>
</dbReference>
<dbReference type="PANTHER" id="PTHR12826">
    <property type="entry name" value="RIBONUCLEASE Y"/>
    <property type="match status" value="1"/>
</dbReference>
<dbReference type="PANTHER" id="PTHR12826:SF13">
    <property type="entry name" value="RNA-BINDING PROTEIN PNO1"/>
    <property type="match status" value="1"/>
</dbReference>
<dbReference type="Pfam" id="PF22891">
    <property type="entry name" value="KH_PNO1_2nd"/>
    <property type="match status" value="1"/>
</dbReference>
<dbReference type="SUPFAM" id="SSF54791">
    <property type="entry name" value="Eukaryotic type KH-domain (KH-domain type I)"/>
    <property type="match status" value="1"/>
</dbReference>
<proteinExistence type="inferred from homology"/>
<gene>
    <name type="primary">PNO1</name>
    <name type="ordered locus">CNA05860</name>
</gene>
<protein>
    <recommendedName>
        <fullName>Pre-rRNA-processing protein PNO1</fullName>
    </recommendedName>
</protein>
<reference key="1">
    <citation type="journal article" date="2005" name="Science">
        <title>The genome of the basidiomycetous yeast and human pathogen Cryptococcus neoformans.</title>
        <authorList>
            <person name="Loftus B.J."/>
            <person name="Fung E."/>
            <person name="Roncaglia P."/>
            <person name="Rowley D."/>
            <person name="Amedeo P."/>
            <person name="Bruno D."/>
            <person name="Vamathevan J."/>
            <person name="Miranda M."/>
            <person name="Anderson I.J."/>
            <person name="Fraser J.A."/>
            <person name="Allen J.E."/>
            <person name="Bosdet I.E."/>
            <person name="Brent M.R."/>
            <person name="Chiu R."/>
            <person name="Doering T.L."/>
            <person name="Donlin M.J."/>
            <person name="D'Souza C.A."/>
            <person name="Fox D.S."/>
            <person name="Grinberg V."/>
            <person name="Fu J."/>
            <person name="Fukushima M."/>
            <person name="Haas B.J."/>
            <person name="Huang J.C."/>
            <person name="Janbon G."/>
            <person name="Jones S.J.M."/>
            <person name="Koo H.L."/>
            <person name="Krzywinski M.I."/>
            <person name="Kwon-Chung K.J."/>
            <person name="Lengeler K.B."/>
            <person name="Maiti R."/>
            <person name="Marra M.A."/>
            <person name="Marra R.E."/>
            <person name="Mathewson C.A."/>
            <person name="Mitchell T.G."/>
            <person name="Pertea M."/>
            <person name="Riggs F.R."/>
            <person name="Salzberg S.L."/>
            <person name="Schein J.E."/>
            <person name="Shvartsbeyn A."/>
            <person name="Shin H."/>
            <person name="Shumway M."/>
            <person name="Specht C.A."/>
            <person name="Suh B.B."/>
            <person name="Tenney A."/>
            <person name="Utterback T.R."/>
            <person name="Wickes B.L."/>
            <person name="Wortman J.R."/>
            <person name="Wye N.H."/>
            <person name="Kronstad J.W."/>
            <person name="Lodge J.K."/>
            <person name="Heitman J."/>
            <person name="Davis R.W."/>
            <person name="Fraser C.M."/>
            <person name="Hyman R.W."/>
        </authorList>
    </citation>
    <scope>NUCLEOTIDE SEQUENCE [LARGE SCALE GENOMIC DNA]</scope>
    <source>
        <strain>JEC21 / ATCC MYA-565</strain>
    </source>
</reference>
<accession>P0CO46</accession>
<accession>Q55ZC2</accession>
<accession>Q5KNN7</accession>
<evidence type="ECO:0000250" key="1"/>
<evidence type="ECO:0000250" key="2">
    <source>
        <dbReference type="UniProtKB" id="Q99216"/>
    </source>
</evidence>
<evidence type="ECO:0000256" key="3">
    <source>
        <dbReference type="SAM" id="MobiDB-lite"/>
    </source>
</evidence>
<evidence type="ECO:0000305" key="4"/>
<keyword id="KW-0963">Cytoplasm</keyword>
<keyword id="KW-0539">Nucleus</keyword>
<keyword id="KW-1185">Reference proteome</keyword>
<keyword id="KW-0690">Ribosome biogenesis</keyword>
<keyword id="KW-0694">RNA-binding</keyword>
<organism>
    <name type="scientific">Cryptococcus neoformans var. neoformans serotype D (strain JEC21 / ATCC MYA-565)</name>
    <name type="common">Filobasidiella neoformans</name>
    <dbReference type="NCBI Taxonomy" id="214684"/>
    <lineage>
        <taxon>Eukaryota</taxon>
        <taxon>Fungi</taxon>
        <taxon>Dikarya</taxon>
        <taxon>Basidiomycota</taxon>
        <taxon>Agaricomycotina</taxon>
        <taxon>Tremellomycetes</taxon>
        <taxon>Tremellales</taxon>
        <taxon>Cryptococcaceae</taxon>
        <taxon>Cryptococcus</taxon>
        <taxon>Cryptococcus neoformans species complex</taxon>
    </lineage>
</organism>
<feature type="chain" id="PRO_0000278368" description="Pre-rRNA-processing protein PNO1">
    <location>
        <begin position="1"/>
        <end position="266"/>
    </location>
</feature>
<feature type="domain" description="KH">
    <location>
        <begin position="190"/>
        <end position="239"/>
    </location>
</feature>
<feature type="region of interest" description="Disordered" evidence="3">
    <location>
        <begin position="1"/>
        <end position="40"/>
    </location>
</feature>
<feature type="region of interest" description="Disordered" evidence="3">
    <location>
        <begin position="50"/>
        <end position="69"/>
    </location>
</feature>
<feature type="compositionally biased region" description="Basic residues" evidence="3">
    <location>
        <begin position="1"/>
        <end position="10"/>
    </location>
</feature>
<feature type="compositionally biased region" description="Polar residues" evidence="3">
    <location>
        <begin position="15"/>
        <end position="26"/>
    </location>
</feature>
<name>PNO1_CRYNJ</name>
<sequence length="266" mass="28905">MAHKSHRHKALQAQLEAQPTISLISQKTRKPPAPSMDVDQDDDVLISTNAASAPNTTDPSDAPVSATTTSSGFAPLTAAAQSTVLKNEFRRIPIPPHRMTPLKRDWVNLYTPMVEMLGLQVRMNPQRKAVELKTSGHTVDSGAIQKGADFVKAYALGFDVNDALALLRLDDLYLDSFEIKDVKTLHGDHLARAIGRIAGEGGKVKFSIENASRTRIVLADTHIHILGSVQNIKIARDAVVSLILGSPPGKVYAHLKAVGARMKQRF</sequence>
<comment type="function">
    <text evidence="1">Required for small ribosomal subunit (SSU) synthesis. Has a role in the processing of early nucleolar and late cytoplasmic pre-RNA species (By similarity).</text>
</comment>
<comment type="subunit">
    <text evidence="1">Component of the small ribosomal subunit, ribosomal RNA processing complex (SSU RRP complex).</text>
</comment>
<comment type="subcellular location">
    <subcellularLocation>
        <location evidence="2">Cytoplasm</location>
    </subcellularLocation>
    <subcellularLocation>
        <location evidence="2">Nucleus</location>
        <location evidence="2">Nucleolus</location>
    </subcellularLocation>
</comment>
<comment type="similarity">
    <text evidence="4">Belongs to the PNO1 family.</text>
</comment>